<protein>
    <recommendedName>
        <fullName evidence="1">Glutamate racemase</fullName>
        <ecNumber evidence="1">5.1.1.3</ecNumber>
    </recommendedName>
</protein>
<name>MURI_BIFAA</name>
<keyword id="KW-0133">Cell shape</keyword>
<keyword id="KW-0961">Cell wall biogenesis/degradation</keyword>
<keyword id="KW-0413">Isomerase</keyword>
<keyword id="KW-0573">Peptidoglycan synthesis</keyword>
<keyword id="KW-1185">Reference proteome</keyword>
<accession>A1A2L6</accession>
<sequence>MASTAPIGVFDSGLGGISVAREIRRDMPNEHVLYFGDSANAPYGTKSPEQVRELSDVIVKRFVEQGVKAVVIACNTATSAAANELRDTYDIPIIGMEPALKVACDRGHGKRQRVIVAATPLTLRERKFAVLMDRFKADHTIFPEPCPGLVEIVEHGQLDDHDVVMRTLHQYFDQYDLSTIDSVVLGCTHFVFYRDYFRELLPDTAAIIDGNEGTVRHLGVVLESLGKLAPEDAEGSIDLANSDTSARIAQLAQSLLDR</sequence>
<evidence type="ECO:0000255" key="1">
    <source>
        <dbReference type="HAMAP-Rule" id="MF_00258"/>
    </source>
</evidence>
<organism>
    <name type="scientific">Bifidobacterium adolescentis (strain ATCC 15703 / DSM 20083 / NCTC 11814 / E194a)</name>
    <dbReference type="NCBI Taxonomy" id="367928"/>
    <lineage>
        <taxon>Bacteria</taxon>
        <taxon>Bacillati</taxon>
        <taxon>Actinomycetota</taxon>
        <taxon>Actinomycetes</taxon>
        <taxon>Bifidobacteriales</taxon>
        <taxon>Bifidobacteriaceae</taxon>
        <taxon>Bifidobacterium</taxon>
    </lineage>
</organism>
<gene>
    <name evidence="1" type="primary">murI</name>
    <name type="ordered locus">BAD_1168</name>
</gene>
<proteinExistence type="inferred from homology"/>
<comment type="function">
    <text evidence="1">Provides the (R)-glutamate required for cell wall biosynthesis.</text>
</comment>
<comment type="catalytic activity">
    <reaction evidence="1">
        <text>L-glutamate = D-glutamate</text>
        <dbReference type="Rhea" id="RHEA:12813"/>
        <dbReference type="ChEBI" id="CHEBI:29985"/>
        <dbReference type="ChEBI" id="CHEBI:29986"/>
        <dbReference type="EC" id="5.1.1.3"/>
    </reaction>
</comment>
<comment type="pathway">
    <text evidence="1">Cell wall biogenesis; peptidoglycan biosynthesis.</text>
</comment>
<comment type="similarity">
    <text evidence="1">Belongs to the aspartate/glutamate racemases family.</text>
</comment>
<reference key="1">
    <citation type="submission" date="2006-12" db="EMBL/GenBank/DDBJ databases">
        <title>Bifidobacterium adolescentis complete genome sequence.</title>
        <authorList>
            <person name="Suzuki T."/>
            <person name="Tsuda Y."/>
            <person name="Kanou N."/>
            <person name="Inoue T."/>
            <person name="Kumazaki K."/>
            <person name="Nagano S."/>
            <person name="Hirai S."/>
            <person name="Tanaka K."/>
            <person name="Watanabe K."/>
        </authorList>
    </citation>
    <scope>NUCLEOTIDE SEQUENCE [LARGE SCALE GENOMIC DNA]</scope>
    <source>
        <strain>ATCC 15703 / DSM 20083 / NCTC 11814 / E194a</strain>
    </source>
</reference>
<feature type="chain" id="PRO_1000047548" description="Glutamate racemase">
    <location>
        <begin position="1"/>
        <end position="258"/>
    </location>
</feature>
<feature type="active site" description="Proton donor/acceptor" evidence="1">
    <location>
        <position position="74"/>
    </location>
</feature>
<feature type="active site" description="Proton donor/acceptor" evidence="1">
    <location>
        <position position="187"/>
    </location>
</feature>
<feature type="binding site" evidence="1">
    <location>
        <begin position="11"/>
        <end position="12"/>
    </location>
    <ligand>
        <name>substrate</name>
    </ligand>
</feature>
<feature type="binding site" evidence="1">
    <location>
        <begin position="43"/>
        <end position="44"/>
    </location>
    <ligand>
        <name>substrate</name>
    </ligand>
</feature>
<feature type="binding site" evidence="1">
    <location>
        <begin position="75"/>
        <end position="76"/>
    </location>
    <ligand>
        <name>substrate</name>
    </ligand>
</feature>
<feature type="binding site" evidence="1">
    <location>
        <begin position="188"/>
        <end position="189"/>
    </location>
    <ligand>
        <name>substrate</name>
    </ligand>
</feature>
<dbReference type="EC" id="5.1.1.3" evidence="1"/>
<dbReference type="EMBL" id="AP009256">
    <property type="protein sequence ID" value="BAF39949.1"/>
    <property type="molecule type" value="Genomic_DNA"/>
</dbReference>
<dbReference type="RefSeq" id="WP_011743498.1">
    <property type="nucleotide sequence ID" value="NC_008618.1"/>
</dbReference>
<dbReference type="SMR" id="A1A2L6"/>
<dbReference type="STRING" id="367928.BAD_1168"/>
<dbReference type="PaxDb" id="1680-BADO_1320"/>
<dbReference type="GeneID" id="4556379"/>
<dbReference type="KEGG" id="bad:BAD_1168"/>
<dbReference type="HOGENOM" id="CLU_052344_1_0_11"/>
<dbReference type="UniPathway" id="UPA00219"/>
<dbReference type="Proteomes" id="UP000008702">
    <property type="component" value="Chromosome"/>
</dbReference>
<dbReference type="GO" id="GO:0008881">
    <property type="term" value="F:glutamate racemase activity"/>
    <property type="evidence" value="ECO:0007669"/>
    <property type="project" value="UniProtKB-UniRule"/>
</dbReference>
<dbReference type="GO" id="GO:0071555">
    <property type="term" value="P:cell wall organization"/>
    <property type="evidence" value="ECO:0007669"/>
    <property type="project" value="UniProtKB-KW"/>
</dbReference>
<dbReference type="GO" id="GO:0009252">
    <property type="term" value="P:peptidoglycan biosynthetic process"/>
    <property type="evidence" value="ECO:0007669"/>
    <property type="project" value="UniProtKB-UniRule"/>
</dbReference>
<dbReference type="GO" id="GO:0008360">
    <property type="term" value="P:regulation of cell shape"/>
    <property type="evidence" value="ECO:0007669"/>
    <property type="project" value="UniProtKB-KW"/>
</dbReference>
<dbReference type="FunFam" id="3.40.50.1860:FF:000002">
    <property type="entry name" value="Glutamate racemase"/>
    <property type="match status" value="1"/>
</dbReference>
<dbReference type="Gene3D" id="3.40.50.1860">
    <property type="match status" value="2"/>
</dbReference>
<dbReference type="HAMAP" id="MF_00258">
    <property type="entry name" value="Glu_racemase"/>
    <property type="match status" value="1"/>
</dbReference>
<dbReference type="InterPro" id="IPR015942">
    <property type="entry name" value="Asp/Glu/hydantoin_racemase"/>
</dbReference>
<dbReference type="InterPro" id="IPR001920">
    <property type="entry name" value="Asp/Glu_race"/>
</dbReference>
<dbReference type="InterPro" id="IPR018187">
    <property type="entry name" value="Asp/Glu_racemase_AS_1"/>
</dbReference>
<dbReference type="InterPro" id="IPR004391">
    <property type="entry name" value="Glu_race"/>
</dbReference>
<dbReference type="NCBIfam" id="TIGR00067">
    <property type="entry name" value="glut_race"/>
    <property type="match status" value="1"/>
</dbReference>
<dbReference type="PANTHER" id="PTHR21198">
    <property type="entry name" value="GLUTAMATE RACEMASE"/>
    <property type="match status" value="1"/>
</dbReference>
<dbReference type="PANTHER" id="PTHR21198:SF3">
    <property type="entry name" value="GLUTAMATE RACEMASE"/>
    <property type="match status" value="1"/>
</dbReference>
<dbReference type="Pfam" id="PF01177">
    <property type="entry name" value="Asp_Glu_race"/>
    <property type="match status" value="1"/>
</dbReference>
<dbReference type="SUPFAM" id="SSF53681">
    <property type="entry name" value="Aspartate/glutamate racemase"/>
    <property type="match status" value="2"/>
</dbReference>
<dbReference type="PROSITE" id="PS00923">
    <property type="entry name" value="ASP_GLU_RACEMASE_1"/>
    <property type="match status" value="1"/>
</dbReference>